<organismHost>
    <name type="scientific">Homo sapiens</name>
    <name type="common">Human</name>
    <dbReference type="NCBI Taxonomy" id="9606"/>
</organismHost>
<protein>
    <recommendedName>
        <fullName>Hexon-associated protein</fullName>
    </recommendedName>
    <alternativeName>
        <fullName>Protein VIII</fullName>
        <shortName>pVIII</shortName>
    </alternativeName>
</protein>
<feature type="propeptide" id="PRO_0000036493">
    <location>
        <begin position="1" status="less than"/>
        <end position="19"/>
    </location>
</feature>
<feature type="chain" id="PRO_0000036494" description="Hexon-associated protein">
    <location>
        <begin position="20"/>
        <end position="135"/>
    </location>
</feature>
<feature type="site" description="Cleavage; by adenovirus protease">
    <location>
        <begin position="19"/>
        <end position="20"/>
    </location>
</feature>
<feature type="non-terminal residue">
    <location>
        <position position="1"/>
    </location>
</feature>
<sequence>RDAQAEVQMTNAGVQLAGGSALCRHRPQQSIKRLVIRGRGIQLNDESVSSSLGLRPDGVFQIAGCGRSSFTPRQAVLTLESSSSQPRSGGIGTLQFVEEFTPSVYFNPFSGSPGQYPDEFIPNFDAISESVDGYD</sequence>
<name>HEX8_ADE03</name>
<organism>
    <name type="scientific">Human adenovirus B serotype 3</name>
    <name type="common">HAdV-3</name>
    <name type="synonym">Human adenovirus 3</name>
    <dbReference type="NCBI Taxonomy" id="45659"/>
    <lineage>
        <taxon>Viruses</taxon>
        <taxon>Varidnaviria</taxon>
        <taxon>Bamfordvirae</taxon>
        <taxon>Preplasmiviricota</taxon>
        <taxon>Tectiliviricetes</taxon>
        <taxon>Rowavirales</taxon>
        <taxon>Adenoviridae</taxon>
        <taxon>Mastadenovirus</taxon>
        <taxon>Human mastadenovirus B</taxon>
    </lineage>
</organism>
<proteinExistence type="inferred from homology"/>
<dbReference type="EMBL" id="M15952">
    <property type="status" value="NOT_ANNOTATED_CDS"/>
    <property type="molecule type" value="Genomic_DNA"/>
</dbReference>
<dbReference type="PIR" id="A29500">
    <property type="entry name" value="SXAD31"/>
</dbReference>
<dbReference type="GO" id="GO:0019028">
    <property type="term" value="C:viral capsid"/>
    <property type="evidence" value="ECO:0007669"/>
    <property type="project" value="InterPro"/>
</dbReference>
<dbReference type="GO" id="GO:0031423">
    <property type="term" value="F:hexon binding"/>
    <property type="evidence" value="ECO:0007669"/>
    <property type="project" value="InterPro"/>
</dbReference>
<dbReference type="InterPro" id="IPR000646">
    <property type="entry name" value="Adeno_PVIII"/>
</dbReference>
<dbReference type="Pfam" id="PF01310">
    <property type="entry name" value="Adeno_PVIII"/>
    <property type="match status" value="1"/>
</dbReference>
<accession>P11324</accession>
<reference key="1">
    <citation type="journal article" date="1986" name="Gene">
        <title>Region E3 of human adenoviruses; differences between the oncogenic adenovirus-3 and the non-oncogenic adenovirus-2.</title>
        <authorList>
            <person name="Signaes C."/>
            <person name="Akusjaervi G."/>
            <person name="Pettersson U."/>
        </authorList>
    </citation>
    <scope>NUCLEOTIDE SEQUENCE [GENOMIC DNA]</scope>
</reference>
<evidence type="ECO:0000305" key="1"/>
<comment type="similarity">
    <text evidence="1">Belongs to the adenoviridae pVIII family.</text>
</comment>
<gene>
    <name type="primary">PVIII</name>
</gene>